<feature type="chain" id="PRO_1000096567" description="Uracil-DNA glycosylase">
    <location>
        <begin position="1"/>
        <end position="223"/>
    </location>
</feature>
<feature type="active site" description="Proton acceptor" evidence="1">
    <location>
        <position position="67"/>
    </location>
</feature>
<keyword id="KW-0963">Cytoplasm</keyword>
<keyword id="KW-0227">DNA damage</keyword>
<keyword id="KW-0234">DNA repair</keyword>
<keyword id="KW-0378">Hydrolase</keyword>
<accession>B2S1N8</accession>
<proteinExistence type="inferred from homology"/>
<dbReference type="EC" id="3.2.2.27" evidence="1"/>
<dbReference type="EMBL" id="CP000048">
    <property type="protein sequence ID" value="AAX16575.1"/>
    <property type="molecule type" value="Genomic_DNA"/>
</dbReference>
<dbReference type="RefSeq" id="WP_012421832.1">
    <property type="nucleotide sequence ID" value="NZ_CP073136.1"/>
</dbReference>
<dbReference type="SMR" id="B2S1N8"/>
<dbReference type="KEGG" id="bhr:BH0053"/>
<dbReference type="HOGENOM" id="CLU_032162_3_0_12"/>
<dbReference type="Proteomes" id="UP000008834">
    <property type="component" value="Chromosome"/>
</dbReference>
<dbReference type="GO" id="GO:0005737">
    <property type="term" value="C:cytoplasm"/>
    <property type="evidence" value="ECO:0007669"/>
    <property type="project" value="UniProtKB-SubCell"/>
</dbReference>
<dbReference type="GO" id="GO:0004844">
    <property type="term" value="F:uracil DNA N-glycosylase activity"/>
    <property type="evidence" value="ECO:0007669"/>
    <property type="project" value="UniProtKB-UniRule"/>
</dbReference>
<dbReference type="GO" id="GO:0097510">
    <property type="term" value="P:base-excision repair, AP site formation via deaminated base removal"/>
    <property type="evidence" value="ECO:0007669"/>
    <property type="project" value="TreeGrafter"/>
</dbReference>
<dbReference type="CDD" id="cd10027">
    <property type="entry name" value="UDG-F1-like"/>
    <property type="match status" value="1"/>
</dbReference>
<dbReference type="FunFam" id="3.40.470.10:FF:000001">
    <property type="entry name" value="Uracil-DNA glycosylase"/>
    <property type="match status" value="1"/>
</dbReference>
<dbReference type="Gene3D" id="3.40.470.10">
    <property type="entry name" value="Uracil-DNA glycosylase-like domain"/>
    <property type="match status" value="1"/>
</dbReference>
<dbReference type="HAMAP" id="MF_00148">
    <property type="entry name" value="UDG"/>
    <property type="match status" value="1"/>
</dbReference>
<dbReference type="InterPro" id="IPR002043">
    <property type="entry name" value="UDG_fam1"/>
</dbReference>
<dbReference type="InterPro" id="IPR018085">
    <property type="entry name" value="Ura-DNA_Glyclase_AS"/>
</dbReference>
<dbReference type="InterPro" id="IPR005122">
    <property type="entry name" value="Uracil-DNA_glycosylase-like"/>
</dbReference>
<dbReference type="InterPro" id="IPR036895">
    <property type="entry name" value="Uracil-DNA_glycosylase-like_sf"/>
</dbReference>
<dbReference type="NCBIfam" id="NF003588">
    <property type="entry name" value="PRK05254.1-1"/>
    <property type="match status" value="1"/>
</dbReference>
<dbReference type="NCBIfam" id="NF003589">
    <property type="entry name" value="PRK05254.1-2"/>
    <property type="match status" value="1"/>
</dbReference>
<dbReference type="NCBIfam" id="NF003591">
    <property type="entry name" value="PRK05254.1-4"/>
    <property type="match status" value="1"/>
</dbReference>
<dbReference type="NCBIfam" id="NF003592">
    <property type="entry name" value="PRK05254.1-5"/>
    <property type="match status" value="1"/>
</dbReference>
<dbReference type="NCBIfam" id="TIGR00628">
    <property type="entry name" value="ung"/>
    <property type="match status" value="1"/>
</dbReference>
<dbReference type="PANTHER" id="PTHR11264">
    <property type="entry name" value="URACIL-DNA GLYCOSYLASE"/>
    <property type="match status" value="1"/>
</dbReference>
<dbReference type="PANTHER" id="PTHR11264:SF0">
    <property type="entry name" value="URACIL-DNA GLYCOSYLASE"/>
    <property type="match status" value="1"/>
</dbReference>
<dbReference type="Pfam" id="PF03167">
    <property type="entry name" value="UDG"/>
    <property type="match status" value="1"/>
</dbReference>
<dbReference type="SMART" id="SM00986">
    <property type="entry name" value="UDG"/>
    <property type="match status" value="1"/>
</dbReference>
<dbReference type="SMART" id="SM00987">
    <property type="entry name" value="UreE_C"/>
    <property type="match status" value="1"/>
</dbReference>
<dbReference type="SUPFAM" id="SSF52141">
    <property type="entry name" value="Uracil-DNA glycosylase-like"/>
    <property type="match status" value="1"/>
</dbReference>
<dbReference type="PROSITE" id="PS00130">
    <property type="entry name" value="U_DNA_GLYCOSYLASE"/>
    <property type="match status" value="1"/>
</dbReference>
<reference key="1">
    <citation type="submission" date="2004-12" db="EMBL/GenBank/DDBJ databases">
        <title>The genome sequence of Borrelia hermsii and Borrelia turicatae: comparative analysis of two agents of endemic N. America relapsing fever.</title>
        <authorList>
            <person name="Porcella S.F."/>
            <person name="Raffel S.J."/>
            <person name="Schrumpf M.E."/>
            <person name="Montgomery B."/>
            <person name="Smith T."/>
            <person name="Schwan T.G."/>
        </authorList>
    </citation>
    <scope>NUCLEOTIDE SEQUENCE [LARGE SCALE GENOMIC DNA]</scope>
    <source>
        <strain>HS1 / DAH</strain>
    </source>
</reference>
<sequence>MEVKIEESWKEILKAEFCKGYFKRLVNFIKNEYKTKKGKIFPPPKLIFNAFDSLPFKDIKVVILGQDPYHGKRQANGLAFSVNSDIKIPPSLQNIFKEIERSLKIQTIPNGDLTRWATQGVFLLNSILTVEESRPSSHKDIGWEIFTNEVIKIISKNLNNIVFMLWGNFARGKKELIDASRHLILETSHPSPYSAHNGFLGSNHFSQALRYLKEHNKSPIDFQ</sequence>
<name>UNG_BORHD</name>
<organism>
    <name type="scientific">Borrelia hermsii (strain HS1 / DAH)</name>
    <dbReference type="NCBI Taxonomy" id="314723"/>
    <lineage>
        <taxon>Bacteria</taxon>
        <taxon>Pseudomonadati</taxon>
        <taxon>Spirochaetota</taxon>
        <taxon>Spirochaetia</taxon>
        <taxon>Spirochaetales</taxon>
        <taxon>Borreliaceae</taxon>
        <taxon>Borrelia</taxon>
    </lineage>
</organism>
<gene>
    <name evidence="1" type="primary">ung</name>
    <name type="ordered locus">BH0053</name>
</gene>
<evidence type="ECO:0000255" key="1">
    <source>
        <dbReference type="HAMAP-Rule" id="MF_00148"/>
    </source>
</evidence>
<comment type="function">
    <text evidence="1">Excises uracil residues from the DNA which can arise as a result of misincorporation of dUMP residues by DNA polymerase or due to deamination of cytosine.</text>
</comment>
<comment type="catalytic activity">
    <reaction evidence="1">
        <text>Hydrolyzes single-stranded DNA or mismatched double-stranded DNA and polynucleotides, releasing free uracil.</text>
        <dbReference type="EC" id="3.2.2.27"/>
    </reaction>
</comment>
<comment type="subcellular location">
    <subcellularLocation>
        <location evidence="1">Cytoplasm</location>
    </subcellularLocation>
</comment>
<comment type="similarity">
    <text evidence="1">Belongs to the uracil-DNA glycosylase (UDG) superfamily. UNG family.</text>
</comment>
<protein>
    <recommendedName>
        <fullName evidence="1">Uracil-DNA glycosylase</fullName>
        <shortName evidence="1">UDG</shortName>
        <ecNumber evidence="1">3.2.2.27</ecNumber>
    </recommendedName>
</protein>